<comment type="function">
    <text evidence="1">Involved in the biosynthesis of lipid A, a phosphorylated glycolipid that anchors the lipopolysaccharide to the outer membrane of the cell.</text>
</comment>
<comment type="catalytic activity">
    <reaction evidence="1">
        <text>a (3R)-hydroxyacyl-[ACP] + UDP-N-acetyl-alpha-D-glucosamine = a UDP-3-O-[(3R)-3-hydroxyacyl]-N-acetyl-alpha-D-glucosamine + holo-[ACP]</text>
        <dbReference type="Rhea" id="RHEA:67812"/>
        <dbReference type="Rhea" id="RHEA-COMP:9685"/>
        <dbReference type="Rhea" id="RHEA-COMP:9945"/>
        <dbReference type="ChEBI" id="CHEBI:57705"/>
        <dbReference type="ChEBI" id="CHEBI:64479"/>
        <dbReference type="ChEBI" id="CHEBI:78827"/>
        <dbReference type="ChEBI" id="CHEBI:173225"/>
        <dbReference type="EC" id="2.3.1.129"/>
    </reaction>
</comment>
<comment type="pathway">
    <text evidence="1">Glycolipid biosynthesis; lipid IV(A) biosynthesis; lipid IV(A) from (3R)-3-hydroxytetradecanoyl-[acyl-carrier-protein] and UDP-N-acetyl-alpha-D-glucosamine: step 1/6.</text>
</comment>
<comment type="subunit">
    <text evidence="1">Homotrimer.</text>
</comment>
<comment type="subcellular location">
    <subcellularLocation>
        <location evidence="1">Cytoplasm</location>
    </subcellularLocation>
</comment>
<comment type="similarity">
    <text evidence="1">Belongs to the transferase hexapeptide repeat family. LpxA subfamily.</text>
</comment>
<dbReference type="EC" id="2.3.1.129" evidence="1"/>
<dbReference type="EMBL" id="CP000053">
    <property type="protein sequence ID" value="AAY60857.1"/>
    <property type="molecule type" value="Genomic_DNA"/>
</dbReference>
<dbReference type="SMR" id="Q4UNJ9"/>
<dbReference type="STRING" id="315456.RF_0006"/>
<dbReference type="KEGG" id="rfe:RF_0006"/>
<dbReference type="eggNOG" id="COG1043">
    <property type="taxonomic scope" value="Bacteria"/>
</dbReference>
<dbReference type="HOGENOM" id="CLU_061249_0_0_5"/>
<dbReference type="OrthoDB" id="9807278at2"/>
<dbReference type="UniPathway" id="UPA00359">
    <property type="reaction ID" value="UER00477"/>
</dbReference>
<dbReference type="Proteomes" id="UP000008548">
    <property type="component" value="Chromosome"/>
</dbReference>
<dbReference type="GO" id="GO:0005737">
    <property type="term" value="C:cytoplasm"/>
    <property type="evidence" value="ECO:0007669"/>
    <property type="project" value="UniProtKB-SubCell"/>
</dbReference>
<dbReference type="GO" id="GO:0016020">
    <property type="term" value="C:membrane"/>
    <property type="evidence" value="ECO:0007669"/>
    <property type="project" value="GOC"/>
</dbReference>
<dbReference type="GO" id="GO:0008780">
    <property type="term" value="F:acyl-[acyl-carrier-protein]-UDP-N-acetylglucosamine O-acyltransferase activity"/>
    <property type="evidence" value="ECO:0007669"/>
    <property type="project" value="UniProtKB-UniRule"/>
</dbReference>
<dbReference type="GO" id="GO:0009245">
    <property type="term" value="P:lipid A biosynthetic process"/>
    <property type="evidence" value="ECO:0007669"/>
    <property type="project" value="UniProtKB-UniRule"/>
</dbReference>
<dbReference type="CDD" id="cd03351">
    <property type="entry name" value="LbH_UDP-GlcNAc_AT"/>
    <property type="match status" value="1"/>
</dbReference>
<dbReference type="Gene3D" id="2.160.10.10">
    <property type="entry name" value="Hexapeptide repeat proteins"/>
    <property type="match status" value="1"/>
</dbReference>
<dbReference type="Gene3D" id="1.20.1180.10">
    <property type="entry name" value="Udp N-acetylglucosamine O-acyltransferase, C-terminal domain"/>
    <property type="match status" value="1"/>
</dbReference>
<dbReference type="HAMAP" id="MF_00387">
    <property type="entry name" value="LpxA"/>
    <property type="match status" value="1"/>
</dbReference>
<dbReference type="InterPro" id="IPR029098">
    <property type="entry name" value="Acetyltransf_C"/>
</dbReference>
<dbReference type="InterPro" id="IPR037157">
    <property type="entry name" value="Acetyltransf_C_sf"/>
</dbReference>
<dbReference type="InterPro" id="IPR001451">
    <property type="entry name" value="Hexapep"/>
</dbReference>
<dbReference type="InterPro" id="IPR018357">
    <property type="entry name" value="Hexapep_transf_CS"/>
</dbReference>
<dbReference type="InterPro" id="IPR010137">
    <property type="entry name" value="Lipid_A_LpxA"/>
</dbReference>
<dbReference type="InterPro" id="IPR011004">
    <property type="entry name" value="Trimer_LpxA-like_sf"/>
</dbReference>
<dbReference type="NCBIfam" id="TIGR01852">
    <property type="entry name" value="lipid_A_lpxA"/>
    <property type="match status" value="1"/>
</dbReference>
<dbReference type="NCBIfam" id="NF003657">
    <property type="entry name" value="PRK05289.1"/>
    <property type="match status" value="1"/>
</dbReference>
<dbReference type="PANTHER" id="PTHR43480">
    <property type="entry name" value="ACYL-[ACYL-CARRIER-PROTEIN]--UDP-N-ACETYLGLUCOSAMINE O-ACYLTRANSFERASE"/>
    <property type="match status" value="1"/>
</dbReference>
<dbReference type="PANTHER" id="PTHR43480:SF1">
    <property type="entry name" value="ACYL-[ACYL-CARRIER-PROTEIN]--UDP-N-ACETYLGLUCOSAMINE O-ACYLTRANSFERASE, MITOCHONDRIAL-RELATED"/>
    <property type="match status" value="1"/>
</dbReference>
<dbReference type="Pfam" id="PF13720">
    <property type="entry name" value="Acetyltransf_11"/>
    <property type="match status" value="1"/>
</dbReference>
<dbReference type="Pfam" id="PF00132">
    <property type="entry name" value="Hexapep"/>
    <property type="match status" value="2"/>
</dbReference>
<dbReference type="PIRSF" id="PIRSF000456">
    <property type="entry name" value="UDP-GlcNAc_acltr"/>
    <property type="match status" value="1"/>
</dbReference>
<dbReference type="SUPFAM" id="SSF51161">
    <property type="entry name" value="Trimeric LpxA-like enzymes"/>
    <property type="match status" value="1"/>
</dbReference>
<dbReference type="PROSITE" id="PS00101">
    <property type="entry name" value="HEXAPEP_TRANSFERASES"/>
    <property type="match status" value="1"/>
</dbReference>
<name>LPXA_RICFE</name>
<keyword id="KW-0012">Acyltransferase</keyword>
<keyword id="KW-0963">Cytoplasm</keyword>
<keyword id="KW-0441">Lipid A biosynthesis</keyword>
<keyword id="KW-0444">Lipid biosynthesis</keyword>
<keyword id="KW-0443">Lipid metabolism</keyword>
<keyword id="KW-0677">Repeat</keyword>
<keyword id="KW-0808">Transferase</keyword>
<organism>
    <name type="scientific">Rickettsia felis (strain ATCC VR-1525 / URRWXCal2)</name>
    <name type="common">Rickettsia azadi</name>
    <dbReference type="NCBI Taxonomy" id="315456"/>
    <lineage>
        <taxon>Bacteria</taxon>
        <taxon>Pseudomonadati</taxon>
        <taxon>Pseudomonadota</taxon>
        <taxon>Alphaproteobacteria</taxon>
        <taxon>Rickettsiales</taxon>
        <taxon>Rickettsiaceae</taxon>
        <taxon>Rickettsieae</taxon>
        <taxon>Rickettsia</taxon>
        <taxon>spotted fever group</taxon>
    </lineage>
</organism>
<accession>Q4UNJ9</accession>
<gene>
    <name evidence="1" type="primary">lpxA</name>
    <name type="ordered locus">RF_0006</name>
</gene>
<feature type="chain" id="PRO_0000273128" description="Acyl-[acyl-carrier-protein]--UDP-N-acetylglucosamine O-acyltransferase">
    <location>
        <begin position="1"/>
        <end position="264"/>
    </location>
</feature>
<protein>
    <recommendedName>
        <fullName evidence="1">Acyl-[acyl-carrier-protein]--UDP-N-acetylglucosamine O-acyltransferase</fullName>
        <shortName evidence="1">UDP-N-acetylglucosamine acyltransferase</shortName>
        <ecNumber evidence="1">2.3.1.129</ecNumber>
    </recommendedName>
</protein>
<evidence type="ECO:0000255" key="1">
    <source>
        <dbReference type="HAMAP-Rule" id="MF_00387"/>
    </source>
</evidence>
<reference key="1">
    <citation type="journal article" date="2005" name="PLoS Biol.">
        <title>The genome sequence of Rickettsia felis identifies the first putative conjugative plasmid in an obligate intracellular parasite.</title>
        <authorList>
            <person name="Ogata H."/>
            <person name="Renesto P."/>
            <person name="Audic S."/>
            <person name="Robert C."/>
            <person name="Blanc G."/>
            <person name="Fournier P.-E."/>
            <person name="Parinello H."/>
            <person name="Claverie J.-M."/>
            <person name="Raoult D."/>
        </authorList>
    </citation>
    <scope>NUCLEOTIDE SEQUENCE [LARGE SCALE GENOMIC DNA]</scope>
    <source>
        <strain>ATCC VR-1525 / URRWXCal2</strain>
    </source>
</reference>
<sequence length="264" mass="28512">MSNSNIHPTSLIAEKAKLGKNVKIGPYCIIGPEVVLHDNVELKSHVVIEGITEIGENTVIYPFASIGQPPQILKYANERSNTIIGSNNTIREYVTVQAGSQGGGMVTRVGNNNLFMVGVHIGHDCKIGNNVVFANYVSLAGHIEVGDYAIIGGLSAVHQYARIGEYSMIGGLSPVGADVIPFGLVSSKRAVLEGLNLIGMNRKGFDKADSLSALKAIEEIFSGEGNFAERIKQVAEKYKNNSIVMQIIDFLNQDSSRAFCRFEK</sequence>
<proteinExistence type="inferred from homology"/>